<comment type="function">
    <text evidence="1">Phosphorylation of dTMP to form dTDP in both de novo and salvage pathways of dTTP synthesis.</text>
</comment>
<comment type="catalytic activity">
    <reaction evidence="1">
        <text>dTMP + ATP = dTDP + ADP</text>
        <dbReference type="Rhea" id="RHEA:13517"/>
        <dbReference type="ChEBI" id="CHEBI:30616"/>
        <dbReference type="ChEBI" id="CHEBI:58369"/>
        <dbReference type="ChEBI" id="CHEBI:63528"/>
        <dbReference type="ChEBI" id="CHEBI:456216"/>
        <dbReference type="EC" id="2.7.4.9"/>
    </reaction>
</comment>
<comment type="similarity">
    <text evidence="1">Belongs to the thymidylate kinase family.</text>
</comment>
<accession>Q6KIL4</accession>
<protein>
    <recommendedName>
        <fullName evidence="1">Thymidylate kinase</fullName>
        <ecNumber evidence="1">2.7.4.9</ecNumber>
    </recommendedName>
    <alternativeName>
        <fullName evidence="1">dTMP kinase</fullName>
    </alternativeName>
</protein>
<name>KTHY_MYCM1</name>
<keyword id="KW-0067">ATP-binding</keyword>
<keyword id="KW-0418">Kinase</keyword>
<keyword id="KW-0545">Nucleotide biosynthesis</keyword>
<keyword id="KW-0547">Nucleotide-binding</keyword>
<keyword id="KW-1185">Reference proteome</keyword>
<keyword id="KW-0808">Transferase</keyword>
<evidence type="ECO:0000255" key="1">
    <source>
        <dbReference type="HAMAP-Rule" id="MF_00165"/>
    </source>
</evidence>
<gene>
    <name evidence="1" type="primary">tmk</name>
    <name type="ordered locus">MMOB0760</name>
</gene>
<dbReference type="EC" id="2.7.4.9" evidence="1"/>
<dbReference type="EMBL" id="AE017308">
    <property type="protein sequence ID" value="AAT27562.1"/>
    <property type="molecule type" value="Genomic_DNA"/>
</dbReference>
<dbReference type="RefSeq" id="WP_011264596.1">
    <property type="nucleotide sequence ID" value="NC_006908.1"/>
</dbReference>
<dbReference type="SMR" id="Q6KIL4"/>
<dbReference type="STRING" id="267748.MMOB0760"/>
<dbReference type="KEGG" id="mmo:MMOB0760"/>
<dbReference type="eggNOG" id="COG0125">
    <property type="taxonomic scope" value="Bacteria"/>
</dbReference>
<dbReference type="HOGENOM" id="CLU_049131_0_2_14"/>
<dbReference type="OrthoDB" id="9774907at2"/>
<dbReference type="Proteomes" id="UP000009072">
    <property type="component" value="Chromosome"/>
</dbReference>
<dbReference type="GO" id="GO:0005829">
    <property type="term" value="C:cytosol"/>
    <property type="evidence" value="ECO:0007669"/>
    <property type="project" value="TreeGrafter"/>
</dbReference>
<dbReference type="GO" id="GO:0005524">
    <property type="term" value="F:ATP binding"/>
    <property type="evidence" value="ECO:0007669"/>
    <property type="project" value="UniProtKB-UniRule"/>
</dbReference>
<dbReference type="GO" id="GO:0004798">
    <property type="term" value="F:dTMP kinase activity"/>
    <property type="evidence" value="ECO:0007669"/>
    <property type="project" value="UniProtKB-UniRule"/>
</dbReference>
<dbReference type="GO" id="GO:0006233">
    <property type="term" value="P:dTDP biosynthetic process"/>
    <property type="evidence" value="ECO:0007669"/>
    <property type="project" value="InterPro"/>
</dbReference>
<dbReference type="GO" id="GO:0006235">
    <property type="term" value="P:dTTP biosynthetic process"/>
    <property type="evidence" value="ECO:0007669"/>
    <property type="project" value="UniProtKB-UniRule"/>
</dbReference>
<dbReference type="GO" id="GO:0006227">
    <property type="term" value="P:dUDP biosynthetic process"/>
    <property type="evidence" value="ECO:0007669"/>
    <property type="project" value="TreeGrafter"/>
</dbReference>
<dbReference type="CDD" id="cd01672">
    <property type="entry name" value="TMPK"/>
    <property type="match status" value="1"/>
</dbReference>
<dbReference type="FunFam" id="3.40.50.300:FF:000225">
    <property type="entry name" value="Thymidylate kinase"/>
    <property type="match status" value="1"/>
</dbReference>
<dbReference type="Gene3D" id="3.40.50.300">
    <property type="entry name" value="P-loop containing nucleotide triphosphate hydrolases"/>
    <property type="match status" value="1"/>
</dbReference>
<dbReference type="HAMAP" id="MF_00165">
    <property type="entry name" value="Thymidylate_kinase"/>
    <property type="match status" value="1"/>
</dbReference>
<dbReference type="InterPro" id="IPR027417">
    <property type="entry name" value="P-loop_NTPase"/>
</dbReference>
<dbReference type="InterPro" id="IPR039430">
    <property type="entry name" value="Thymidylate_kin-like_dom"/>
</dbReference>
<dbReference type="InterPro" id="IPR018095">
    <property type="entry name" value="Thymidylate_kin_CS"/>
</dbReference>
<dbReference type="InterPro" id="IPR018094">
    <property type="entry name" value="Thymidylate_kinase"/>
</dbReference>
<dbReference type="NCBIfam" id="TIGR00041">
    <property type="entry name" value="DTMP_kinase"/>
    <property type="match status" value="1"/>
</dbReference>
<dbReference type="PANTHER" id="PTHR10344">
    <property type="entry name" value="THYMIDYLATE KINASE"/>
    <property type="match status" value="1"/>
</dbReference>
<dbReference type="PANTHER" id="PTHR10344:SF4">
    <property type="entry name" value="UMP-CMP KINASE 2, MITOCHONDRIAL"/>
    <property type="match status" value="1"/>
</dbReference>
<dbReference type="Pfam" id="PF02223">
    <property type="entry name" value="Thymidylate_kin"/>
    <property type="match status" value="1"/>
</dbReference>
<dbReference type="SUPFAM" id="SSF52540">
    <property type="entry name" value="P-loop containing nucleoside triphosphate hydrolases"/>
    <property type="match status" value="1"/>
</dbReference>
<dbReference type="PROSITE" id="PS01331">
    <property type="entry name" value="THYMIDYLATE_KINASE"/>
    <property type="match status" value="1"/>
</dbReference>
<reference key="1">
    <citation type="journal article" date="2004" name="Genome Res.">
        <title>The complete genome and proteome of Mycoplasma mobile.</title>
        <authorList>
            <person name="Jaffe J.D."/>
            <person name="Stange-Thomann N."/>
            <person name="Smith C."/>
            <person name="DeCaprio D."/>
            <person name="Fisher S."/>
            <person name="Butler J."/>
            <person name="Calvo S."/>
            <person name="Elkins T."/>
            <person name="FitzGerald M.G."/>
            <person name="Hafez N."/>
            <person name="Kodira C.D."/>
            <person name="Major J."/>
            <person name="Wang S."/>
            <person name="Wilkinson J."/>
            <person name="Nicol R."/>
            <person name="Nusbaum C."/>
            <person name="Birren B."/>
            <person name="Berg H.C."/>
            <person name="Church G.M."/>
        </authorList>
    </citation>
    <scope>NUCLEOTIDE SEQUENCE [LARGE SCALE GENOMIC DNA]</scope>
    <source>
        <strain>ATCC 43663 / NCTC 11711 / 163 K</strain>
    </source>
</reference>
<organism>
    <name type="scientific">Mycoplasma mobile (strain ATCC 43663 / 163K / NCTC 11711)</name>
    <name type="common">Mesomycoplasma mobile</name>
    <dbReference type="NCBI Taxonomy" id="267748"/>
    <lineage>
        <taxon>Bacteria</taxon>
        <taxon>Bacillati</taxon>
        <taxon>Mycoplasmatota</taxon>
        <taxon>Mycoplasmoidales</taxon>
        <taxon>Metamycoplasmataceae</taxon>
        <taxon>Mesomycoplasma</taxon>
    </lineage>
</organism>
<proteinExistence type="inferred from homology"/>
<sequence>MFISFEGIDGAGKSTIIKKLKRKLPKLYPDKKFVFTREPGGKKLKEAEKIRKILLDKKTNIDPMTETLLYAASRRVHLDSLIWPALKKGHIVISDRYVDSSYVYQGIARGLGVKVVKEINDIATSNFMPDYTFFLSISEEESIIRRHKRGKPDRLEMSSKDFFSRAYEGYFKIINSPTMADRFILVNAEENVGTILKNILNEFDKILKK</sequence>
<feature type="chain" id="PRO_0000155304" description="Thymidylate kinase">
    <location>
        <begin position="1"/>
        <end position="209"/>
    </location>
</feature>
<feature type="binding site" evidence="1">
    <location>
        <begin position="7"/>
        <end position="14"/>
    </location>
    <ligand>
        <name>ATP</name>
        <dbReference type="ChEBI" id="CHEBI:30616"/>
    </ligand>
</feature>